<protein>
    <recommendedName>
        <fullName evidence="1">FMN-dependent NADH:quinone oxidoreductase</fullName>
        <ecNumber evidence="1">1.6.5.-</ecNumber>
    </recommendedName>
    <alternativeName>
        <fullName evidence="1">Azo-dye reductase</fullName>
    </alternativeName>
    <alternativeName>
        <fullName evidence="1">FMN-dependent NADH-azo compound oxidoreductase</fullName>
    </alternativeName>
    <alternativeName>
        <fullName evidence="1">FMN-dependent NADH-azoreductase</fullName>
        <ecNumber evidence="1">1.7.1.17</ecNumber>
    </alternativeName>
</protein>
<proteinExistence type="inferred from homology"/>
<dbReference type="EC" id="1.6.5.-" evidence="1"/>
<dbReference type="EC" id="1.7.1.17" evidence="1"/>
<dbReference type="EMBL" id="CP000736">
    <property type="protein sequence ID" value="ABR51064.1"/>
    <property type="molecule type" value="Genomic_DNA"/>
</dbReference>
<dbReference type="SMR" id="A6TXZ6"/>
<dbReference type="KEGG" id="sah:SaurJH1_0202"/>
<dbReference type="HOGENOM" id="CLU_088964_3_1_9"/>
<dbReference type="GO" id="GO:0009055">
    <property type="term" value="F:electron transfer activity"/>
    <property type="evidence" value="ECO:0007669"/>
    <property type="project" value="UniProtKB-UniRule"/>
</dbReference>
<dbReference type="GO" id="GO:0010181">
    <property type="term" value="F:FMN binding"/>
    <property type="evidence" value="ECO:0007669"/>
    <property type="project" value="UniProtKB-UniRule"/>
</dbReference>
<dbReference type="GO" id="GO:0016652">
    <property type="term" value="F:oxidoreductase activity, acting on NAD(P)H as acceptor"/>
    <property type="evidence" value="ECO:0007669"/>
    <property type="project" value="UniProtKB-UniRule"/>
</dbReference>
<dbReference type="GO" id="GO:0016655">
    <property type="term" value="F:oxidoreductase activity, acting on NAD(P)H, quinone or similar compound as acceptor"/>
    <property type="evidence" value="ECO:0007669"/>
    <property type="project" value="InterPro"/>
</dbReference>
<dbReference type="Gene3D" id="3.40.50.360">
    <property type="match status" value="1"/>
</dbReference>
<dbReference type="HAMAP" id="MF_01216">
    <property type="entry name" value="Azoreductase_type1"/>
    <property type="match status" value="1"/>
</dbReference>
<dbReference type="InterPro" id="IPR003680">
    <property type="entry name" value="Flavodoxin_fold"/>
</dbReference>
<dbReference type="InterPro" id="IPR029039">
    <property type="entry name" value="Flavoprotein-like_sf"/>
</dbReference>
<dbReference type="InterPro" id="IPR050104">
    <property type="entry name" value="FMN-dep_NADH:Q_OxRdtase_AzoR1"/>
</dbReference>
<dbReference type="InterPro" id="IPR023048">
    <property type="entry name" value="NADH:quinone_OxRdtase_FMN_depd"/>
</dbReference>
<dbReference type="NCBIfam" id="NF010075">
    <property type="entry name" value="PRK13556.1"/>
    <property type="match status" value="1"/>
</dbReference>
<dbReference type="PANTHER" id="PTHR43741">
    <property type="entry name" value="FMN-DEPENDENT NADH-AZOREDUCTASE 1"/>
    <property type="match status" value="1"/>
</dbReference>
<dbReference type="PANTHER" id="PTHR43741:SF7">
    <property type="entry name" value="FMN-DEPENDENT NADH:QUINONE OXIDOREDUCTASE"/>
    <property type="match status" value="1"/>
</dbReference>
<dbReference type="Pfam" id="PF02525">
    <property type="entry name" value="Flavodoxin_2"/>
    <property type="match status" value="1"/>
</dbReference>
<dbReference type="SUPFAM" id="SSF52218">
    <property type="entry name" value="Flavoproteins"/>
    <property type="match status" value="1"/>
</dbReference>
<name>AZOR_STAA2</name>
<accession>A6TXZ6</accession>
<comment type="function">
    <text evidence="1">Quinone reductase that provides resistance to thiol-specific stress caused by electrophilic quinones.</text>
</comment>
<comment type="function">
    <text evidence="1">Also exhibits azoreductase activity. Catalyzes the reductive cleavage of the azo bond in aromatic azo compounds to the corresponding amines.</text>
</comment>
<comment type="catalytic activity">
    <reaction evidence="1">
        <text>2 a quinone + NADH + H(+) = 2 a 1,4-benzosemiquinone + NAD(+)</text>
        <dbReference type="Rhea" id="RHEA:65952"/>
        <dbReference type="ChEBI" id="CHEBI:15378"/>
        <dbReference type="ChEBI" id="CHEBI:57540"/>
        <dbReference type="ChEBI" id="CHEBI:57945"/>
        <dbReference type="ChEBI" id="CHEBI:132124"/>
        <dbReference type="ChEBI" id="CHEBI:134225"/>
    </reaction>
</comment>
<comment type="catalytic activity">
    <reaction evidence="1">
        <text>N,N-dimethyl-1,4-phenylenediamine + anthranilate + 2 NAD(+) = 2-(4-dimethylaminophenyl)diazenylbenzoate + 2 NADH + 2 H(+)</text>
        <dbReference type="Rhea" id="RHEA:55872"/>
        <dbReference type="ChEBI" id="CHEBI:15378"/>
        <dbReference type="ChEBI" id="CHEBI:15783"/>
        <dbReference type="ChEBI" id="CHEBI:16567"/>
        <dbReference type="ChEBI" id="CHEBI:57540"/>
        <dbReference type="ChEBI" id="CHEBI:57945"/>
        <dbReference type="ChEBI" id="CHEBI:71579"/>
        <dbReference type="EC" id="1.7.1.17"/>
    </reaction>
</comment>
<comment type="cofactor">
    <cofactor evidence="1">
        <name>FMN</name>
        <dbReference type="ChEBI" id="CHEBI:58210"/>
    </cofactor>
    <text evidence="1">Binds 1 FMN per subunit.</text>
</comment>
<comment type="subunit">
    <text evidence="1">Homodimer.</text>
</comment>
<comment type="similarity">
    <text evidence="1">Belongs to the azoreductase type 1 family.</text>
</comment>
<keyword id="KW-0285">Flavoprotein</keyword>
<keyword id="KW-0288">FMN</keyword>
<keyword id="KW-0520">NAD</keyword>
<keyword id="KW-0560">Oxidoreductase</keyword>
<gene>
    <name evidence="1" type="primary">azoR</name>
    <name type="ordered locus">SaurJH1_0202</name>
</gene>
<feature type="chain" id="PRO_1000085589" description="FMN-dependent NADH:quinone oxidoreductase">
    <location>
        <begin position="1"/>
        <end position="208"/>
    </location>
</feature>
<feature type="binding site" evidence="1">
    <location>
        <begin position="17"/>
        <end position="19"/>
    </location>
    <ligand>
        <name>FMN</name>
        <dbReference type="ChEBI" id="CHEBI:58210"/>
    </ligand>
</feature>
<feature type="binding site" evidence="1">
    <location>
        <begin position="99"/>
        <end position="102"/>
    </location>
    <ligand>
        <name>FMN</name>
        <dbReference type="ChEBI" id="CHEBI:58210"/>
    </ligand>
</feature>
<feature type="binding site" evidence="1">
    <location>
        <begin position="143"/>
        <end position="146"/>
    </location>
    <ligand>
        <name>FMN</name>
        <dbReference type="ChEBI" id="CHEBI:58210"/>
    </ligand>
</feature>
<reference key="1">
    <citation type="submission" date="2007-06" db="EMBL/GenBank/DDBJ databases">
        <title>Complete sequence of chromosome of Staphylococcus aureus subsp. aureus JH1.</title>
        <authorList>
            <consortium name="US DOE Joint Genome Institute"/>
            <person name="Copeland A."/>
            <person name="Lucas S."/>
            <person name="Lapidus A."/>
            <person name="Barry K."/>
            <person name="Detter J.C."/>
            <person name="Glavina del Rio T."/>
            <person name="Hammon N."/>
            <person name="Israni S."/>
            <person name="Dalin E."/>
            <person name="Tice H."/>
            <person name="Pitluck S."/>
            <person name="Chain P."/>
            <person name="Malfatti S."/>
            <person name="Shin M."/>
            <person name="Vergez L."/>
            <person name="Schmutz J."/>
            <person name="Larimer F."/>
            <person name="Land M."/>
            <person name="Hauser L."/>
            <person name="Kyrpides N."/>
            <person name="Ivanova N."/>
            <person name="Tomasz A."/>
            <person name="Richardson P."/>
        </authorList>
    </citation>
    <scope>NUCLEOTIDE SEQUENCE [LARGE SCALE GENOMIC DNA]</scope>
    <source>
        <strain>JH1</strain>
    </source>
</reference>
<sequence>MAKVLYITAHPFNELVSNSMAAGKAFIETYQQQHPDDEVKHIDLFETYIPVIDKDVLTGWGKMSNGETLTDDEQMKVSRLSDILEEFLSADKYVFVTPMWNLSFPPVVKAYIDAISIAGKTFKYSAEGPQGLLTDKKVLHIQSRGGYYTEGPAADFEMGDRYLRTIMTFLGVPSYETIIIEGHNAEPHKTEEIKATSINNAEKLATTF</sequence>
<evidence type="ECO:0000255" key="1">
    <source>
        <dbReference type="HAMAP-Rule" id="MF_01216"/>
    </source>
</evidence>
<organism>
    <name type="scientific">Staphylococcus aureus (strain JH1)</name>
    <dbReference type="NCBI Taxonomy" id="359787"/>
    <lineage>
        <taxon>Bacteria</taxon>
        <taxon>Bacillati</taxon>
        <taxon>Bacillota</taxon>
        <taxon>Bacilli</taxon>
        <taxon>Bacillales</taxon>
        <taxon>Staphylococcaceae</taxon>
        <taxon>Staphylococcus</taxon>
    </lineage>
</organism>